<comment type="subcellular location">
    <subcellularLocation>
        <location evidence="2">Cell membrane</location>
        <topology evidence="2">Multi-pass membrane protein</topology>
    </subcellularLocation>
</comment>
<feature type="chain" id="PRO_0000369121" description="Uncharacterized membrane protein YmcC">
    <location>
        <begin position="1"/>
        <end position="185"/>
    </location>
</feature>
<feature type="transmembrane region" description="Helical" evidence="1">
    <location>
        <begin position="4"/>
        <end position="24"/>
    </location>
</feature>
<feature type="transmembrane region" description="Helical" evidence="1">
    <location>
        <begin position="35"/>
        <end position="55"/>
    </location>
</feature>
<feature type="transmembrane region" description="Helical" evidence="1">
    <location>
        <begin position="60"/>
        <end position="80"/>
    </location>
</feature>
<feature type="transmembrane region" description="Helical" evidence="1">
    <location>
        <begin position="123"/>
        <end position="143"/>
    </location>
</feature>
<feature type="transmembrane region" description="Helical" evidence="1">
    <location>
        <begin position="152"/>
        <end position="172"/>
    </location>
</feature>
<protein>
    <recommendedName>
        <fullName>Uncharacterized membrane protein YmcC</fullName>
    </recommendedName>
</protein>
<gene>
    <name type="primary">ymcC</name>
    <name type="ordered locus">BSU17070</name>
</gene>
<reference key="1">
    <citation type="journal article" date="1997" name="Nature">
        <title>The complete genome sequence of the Gram-positive bacterium Bacillus subtilis.</title>
        <authorList>
            <person name="Kunst F."/>
            <person name="Ogasawara N."/>
            <person name="Moszer I."/>
            <person name="Albertini A.M."/>
            <person name="Alloni G."/>
            <person name="Azevedo V."/>
            <person name="Bertero M.G."/>
            <person name="Bessieres P."/>
            <person name="Bolotin A."/>
            <person name="Borchert S."/>
            <person name="Borriss R."/>
            <person name="Boursier L."/>
            <person name="Brans A."/>
            <person name="Braun M."/>
            <person name="Brignell S.C."/>
            <person name="Bron S."/>
            <person name="Brouillet S."/>
            <person name="Bruschi C.V."/>
            <person name="Caldwell B."/>
            <person name="Capuano V."/>
            <person name="Carter N.M."/>
            <person name="Choi S.-K."/>
            <person name="Codani J.-J."/>
            <person name="Connerton I.F."/>
            <person name="Cummings N.J."/>
            <person name="Daniel R.A."/>
            <person name="Denizot F."/>
            <person name="Devine K.M."/>
            <person name="Duesterhoeft A."/>
            <person name="Ehrlich S.D."/>
            <person name="Emmerson P.T."/>
            <person name="Entian K.-D."/>
            <person name="Errington J."/>
            <person name="Fabret C."/>
            <person name="Ferrari E."/>
            <person name="Foulger D."/>
            <person name="Fritz C."/>
            <person name="Fujita M."/>
            <person name="Fujita Y."/>
            <person name="Fuma S."/>
            <person name="Galizzi A."/>
            <person name="Galleron N."/>
            <person name="Ghim S.-Y."/>
            <person name="Glaser P."/>
            <person name="Goffeau A."/>
            <person name="Golightly E.J."/>
            <person name="Grandi G."/>
            <person name="Guiseppi G."/>
            <person name="Guy B.J."/>
            <person name="Haga K."/>
            <person name="Haiech J."/>
            <person name="Harwood C.R."/>
            <person name="Henaut A."/>
            <person name="Hilbert H."/>
            <person name="Holsappel S."/>
            <person name="Hosono S."/>
            <person name="Hullo M.-F."/>
            <person name="Itaya M."/>
            <person name="Jones L.-M."/>
            <person name="Joris B."/>
            <person name="Karamata D."/>
            <person name="Kasahara Y."/>
            <person name="Klaerr-Blanchard M."/>
            <person name="Klein C."/>
            <person name="Kobayashi Y."/>
            <person name="Koetter P."/>
            <person name="Koningstein G."/>
            <person name="Krogh S."/>
            <person name="Kumano M."/>
            <person name="Kurita K."/>
            <person name="Lapidus A."/>
            <person name="Lardinois S."/>
            <person name="Lauber J."/>
            <person name="Lazarevic V."/>
            <person name="Lee S.-M."/>
            <person name="Levine A."/>
            <person name="Liu H."/>
            <person name="Masuda S."/>
            <person name="Mauel C."/>
            <person name="Medigue C."/>
            <person name="Medina N."/>
            <person name="Mellado R.P."/>
            <person name="Mizuno M."/>
            <person name="Moestl D."/>
            <person name="Nakai S."/>
            <person name="Noback M."/>
            <person name="Noone D."/>
            <person name="O'Reilly M."/>
            <person name="Ogawa K."/>
            <person name="Ogiwara A."/>
            <person name="Oudega B."/>
            <person name="Park S.-H."/>
            <person name="Parro V."/>
            <person name="Pohl T.M."/>
            <person name="Portetelle D."/>
            <person name="Porwollik S."/>
            <person name="Prescott A.M."/>
            <person name="Presecan E."/>
            <person name="Pujic P."/>
            <person name="Purnelle B."/>
            <person name="Rapoport G."/>
            <person name="Rey M."/>
            <person name="Reynolds S."/>
            <person name="Rieger M."/>
            <person name="Rivolta C."/>
            <person name="Rocha E."/>
            <person name="Roche B."/>
            <person name="Rose M."/>
            <person name="Sadaie Y."/>
            <person name="Sato T."/>
            <person name="Scanlan E."/>
            <person name="Schleich S."/>
            <person name="Schroeter R."/>
            <person name="Scoffone F."/>
            <person name="Sekiguchi J."/>
            <person name="Sekowska A."/>
            <person name="Seror S.J."/>
            <person name="Serror P."/>
            <person name="Shin B.-S."/>
            <person name="Soldo B."/>
            <person name="Sorokin A."/>
            <person name="Tacconi E."/>
            <person name="Takagi T."/>
            <person name="Takahashi H."/>
            <person name="Takemaru K."/>
            <person name="Takeuchi M."/>
            <person name="Tamakoshi A."/>
            <person name="Tanaka T."/>
            <person name="Terpstra P."/>
            <person name="Tognoni A."/>
            <person name="Tosato V."/>
            <person name="Uchiyama S."/>
            <person name="Vandenbol M."/>
            <person name="Vannier F."/>
            <person name="Vassarotti A."/>
            <person name="Viari A."/>
            <person name="Wambutt R."/>
            <person name="Wedler E."/>
            <person name="Wedler H."/>
            <person name="Weitzenegger T."/>
            <person name="Winters P."/>
            <person name="Wipat A."/>
            <person name="Yamamoto H."/>
            <person name="Yamane K."/>
            <person name="Yasumoto K."/>
            <person name="Yata K."/>
            <person name="Yoshida K."/>
            <person name="Yoshikawa H.-F."/>
            <person name="Zumstein E."/>
            <person name="Yoshikawa H."/>
            <person name="Danchin A."/>
        </authorList>
    </citation>
    <scope>NUCLEOTIDE SEQUENCE [LARGE SCALE GENOMIC DNA]</scope>
    <source>
        <strain>168</strain>
    </source>
</reference>
<sequence length="185" mass="20511">MNGIAWMIVFCEIAFWVVIVLGLAVRYVFKRHTLGLLFLALTPVIDLILLAATGVDLYRGASATAAHGIAAVYIGISIAYGKQMIQWADEKFQYYVTKKGTKPLKRFGMDHAKHGAKGWLRHVLAYLIGAGLLAGMIYFINDSSRTEALSGILKLWTVIIGIDFLITASYFIWPKKEKASANLRS</sequence>
<name>YMCC_BACSU</name>
<proteinExistence type="predicted"/>
<evidence type="ECO:0000255" key="1"/>
<evidence type="ECO:0000305" key="2"/>
<organism>
    <name type="scientific">Bacillus subtilis (strain 168)</name>
    <dbReference type="NCBI Taxonomy" id="224308"/>
    <lineage>
        <taxon>Bacteria</taxon>
        <taxon>Bacillati</taxon>
        <taxon>Bacillota</taxon>
        <taxon>Bacilli</taxon>
        <taxon>Bacillales</taxon>
        <taxon>Bacillaceae</taxon>
        <taxon>Bacillus</taxon>
    </lineage>
</organism>
<accession>O31780</accession>
<keyword id="KW-1003">Cell membrane</keyword>
<keyword id="KW-0472">Membrane</keyword>
<keyword id="KW-1185">Reference proteome</keyword>
<keyword id="KW-0812">Transmembrane</keyword>
<keyword id="KW-1133">Transmembrane helix</keyword>
<dbReference type="EMBL" id="AL009126">
    <property type="protein sequence ID" value="CAB13579.1"/>
    <property type="molecule type" value="Genomic_DNA"/>
</dbReference>
<dbReference type="PIR" id="E69884">
    <property type="entry name" value="E69884"/>
</dbReference>
<dbReference type="RefSeq" id="NP_389588.1">
    <property type="nucleotide sequence ID" value="NC_000964.3"/>
</dbReference>
<dbReference type="RefSeq" id="WP_003245720.1">
    <property type="nucleotide sequence ID" value="NZ_OZ025638.1"/>
</dbReference>
<dbReference type="FunCoup" id="O31780">
    <property type="interactions" value="60"/>
</dbReference>
<dbReference type="STRING" id="224308.BSU17070"/>
<dbReference type="PaxDb" id="224308-BSU17070"/>
<dbReference type="EnsemblBacteria" id="CAB13579">
    <property type="protein sequence ID" value="CAB13579"/>
    <property type="gene ID" value="BSU_17070"/>
</dbReference>
<dbReference type="GeneID" id="939511"/>
<dbReference type="KEGG" id="bsu:BSU17070"/>
<dbReference type="PATRIC" id="fig|224308.179.peg.1849"/>
<dbReference type="eggNOG" id="ENOG502ZBQP">
    <property type="taxonomic scope" value="Bacteria"/>
</dbReference>
<dbReference type="InParanoid" id="O31780"/>
<dbReference type="OrthoDB" id="2082317at2"/>
<dbReference type="PhylomeDB" id="O31780"/>
<dbReference type="BioCyc" id="BSUB:BSU17070-MONOMER"/>
<dbReference type="Proteomes" id="UP000001570">
    <property type="component" value="Chromosome"/>
</dbReference>
<dbReference type="GO" id="GO:0005886">
    <property type="term" value="C:plasma membrane"/>
    <property type="evidence" value="ECO:0007669"/>
    <property type="project" value="UniProtKB-SubCell"/>
</dbReference>